<gene>
    <name evidence="1" type="primary">rpsT</name>
    <name type="ordered locus">STER_0850</name>
</gene>
<sequence>MANIKSAIKRAELNVKQNEKNSAQKSALRTVIKAFKANPTEEAFRAASASIDKAASKGLIHKNKASRDKSRLAAKLAN</sequence>
<name>RS20_STRTD</name>
<protein>
    <recommendedName>
        <fullName evidence="1">Small ribosomal subunit protein bS20</fullName>
    </recommendedName>
    <alternativeName>
        <fullName evidence="2">30S ribosomal protein S20</fullName>
    </alternativeName>
</protein>
<reference key="1">
    <citation type="journal article" date="2006" name="Proc. Natl. Acad. Sci. U.S.A.">
        <title>Comparative genomics of the lactic acid bacteria.</title>
        <authorList>
            <person name="Makarova K.S."/>
            <person name="Slesarev A."/>
            <person name="Wolf Y.I."/>
            <person name="Sorokin A."/>
            <person name="Mirkin B."/>
            <person name="Koonin E.V."/>
            <person name="Pavlov A."/>
            <person name="Pavlova N."/>
            <person name="Karamychev V."/>
            <person name="Polouchine N."/>
            <person name="Shakhova V."/>
            <person name="Grigoriev I."/>
            <person name="Lou Y."/>
            <person name="Rohksar D."/>
            <person name="Lucas S."/>
            <person name="Huang K."/>
            <person name="Goodstein D.M."/>
            <person name="Hawkins T."/>
            <person name="Plengvidhya V."/>
            <person name="Welker D."/>
            <person name="Hughes J."/>
            <person name="Goh Y."/>
            <person name="Benson A."/>
            <person name="Baldwin K."/>
            <person name="Lee J.-H."/>
            <person name="Diaz-Muniz I."/>
            <person name="Dosti B."/>
            <person name="Smeianov V."/>
            <person name="Wechter W."/>
            <person name="Barabote R."/>
            <person name="Lorca G."/>
            <person name="Altermann E."/>
            <person name="Barrangou R."/>
            <person name="Ganesan B."/>
            <person name="Xie Y."/>
            <person name="Rawsthorne H."/>
            <person name="Tamir D."/>
            <person name="Parker C."/>
            <person name="Breidt F."/>
            <person name="Broadbent J.R."/>
            <person name="Hutkins R."/>
            <person name="O'Sullivan D."/>
            <person name="Steele J."/>
            <person name="Unlu G."/>
            <person name="Saier M.H. Jr."/>
            <person name="Klaenhammer T."/>
            <person name="Richardson P."/>
            <person name="Kozyavkin S."/>
            <person name="Weimer B.C."/>
            <person name="Mills D.A."/>
        </authorList>
    </citation>
    <scope>NUCLEOTIDE SEQUENCE [LARGE SCALE GENOMIC DNA]</scope>
    <source>
        <strain>ATCC BAA-491 / LMD-9</strain>
    </source>
</reference>
<organism>
    <name type="scientific">Streptococcus thermophilus (strain ATCC BAA-491 / LMD-9)</name>
    <dbReference type="NCBI Taxonomy" id="322159"/>
    <lineage>
        <taxon>Bacteria</taxon>
        <taxon>Bacillati</taxon>
        <taxon>Bacillota</taxon>
        <taxon>Bacilli</taxon>
        <taxon>Lactobacillales</taxon>
        <taxon>Streptococcaceae</taxon>
        <taxon>Streptococcus</taxon>
    </lineage>
</organism>
<dbReference type="EMBL" id="CP000419">
    <property type="protein sequence ID" value="ABJ66091.1"/>
    <property type="molecule type" value="Genomic_DNA"/>
</dbReference>
<dbReference type="RefSeq" id="WP_002947597.1">
    <property type="nucleotide sequence ID" value="NC_008532.1"/>
</dbReference>
<dbReference type="SMR" id="Q03L31"/>
<dbReference type="GeneID" id="66898692"/>
<dbReference type="KEGG" id="ste:STER_0850"/>
<dbReference type="HOGENOM" id="CLU_160655_1_1_9"/>
<dbReference type="GO" id="GO:0005829">
    <property type="term" value="C:cytosol"/>
    <property type="evidence" value="ECO:0007669"/>
    <property type="project" value="TreeGrafter"/>
</dbReference>
<dbReference type="GO" id="GO:0015935">
    <property type="term" value="C:small ribosomal subunit"/>
    <property type="evidence" value="ECO:0007669"/>
    <property type="project" value="TreeGrafter"/>
</dbReference>
<dbReference type="GO" id="GO:0070181">
    <property type="term" value="F:small ribosomal subunit rRNA binding"/>
    <property type="evidence" value="ECO:0007669"/>
    <property type="project" value="TreeGrafter"/>
</dbReference>
<dbReference type="GO" id="GO:0003735">
    <property type="term" value="F:structural constituent of ribosome"/>
    <property type="evidence" value="ECO:0007669"/>
    <property type="project" value="InterPro"/>
</dbReference>
<dbReference type="GO" id="GO:0006412">
    <property type="term" value="P:translation"/>
    <property type="evidence" value="ECO:0007669"/>
    <property type="project" value="UniProtKB-UniRule"/>
</dbReference>
<dbReference type="FunFam" id="1.20.58.110:FF:000001">
    <property type="entry name" value="30S ribosomal protein S20"/>
    <property type="match status" value="1"/>
</dbReference>
<dbReference type="Gene3D" id="1.20.58.110">
    <property type="entry name" value="Ribosomal protein S20"/>
    <property type="match status" value="1"/>
</dbReference>
<dbReference type="HAMAP" id="MF_00500">
    <property type="entry name" value="Ribosomal_bS20"/>
    <property type="match status" value="1"/>
</dbReference>
<dbReference type="InterPro" id="IPR002583">
    <property type="entry name" value="Ribosomal_bS20"/>
</dbReference>
<dbReference type="InterPro" id="IPR036510">
    <property type="entry name" value="Ribosomal_bS20_sf"/>
</dbReference>
<dbReference type="NCBIfam" id="TIGR00029">
    <property type="entry name" value="S20"/>
    <property type="match status" value="1"/>
</dbReference>
<dbReference type="PANTHER" id="PTHR33398">
    <property type="entry name" value="30S RIBOSOMAL PROTEIN S20"/>
    <property type="match status" value="1"/>
</dbReference>
<dbReference type="PANTHER" id="PTHR33398:SF1">
    <property type="entry name" value="SMALL RIBOSOMAL SUBUNIT PROTEIN BS20C"/>
    <property type="match status" value="1"/>
</dbReference>
<dbReference type="Pfam" id="PF01649">
    <property type="entry name" value="Ribosomal_S20p"/>
    <property type="match status" value="1"/>
</dbReference>
<dbReference type="SUPFAM" id="SSF46992">
    <property type="entry name" value="Ribosomal protein S20"/>
    <property type="match status" value="1"/>
</dbReference>
<proteinExistence type="inferred from homology"/>
<keyword id="KW-0687">Ribonucleoprotein</keyword>
<keyword id="KW-0689">Ribosomal protein</keyword>
<keyword id="KW-0694">RNA-binding</keyword>
<keyword id="KW-0699">rRNA-binding</keyword>
<evidence type="ECO:0000255" key="1">
    <source>
        <dbReference type="HAMAP-Rule" id="MF_00500"/>
    </source>
</evidence>
<evidence type="ECO:0000305" key="2"/>
<comment type="function">
    <text evidence="1">Binds directly to 16S ribosomal RNA.</text>
</comment>
<comment type="similarity">
    <text evidence="1">Belongs to the bacterial ribosomal protein bS20 family.</text>
</comment>
<accession>Q03L31</accession>
<feature type="chain" id="PRO_1000014665" description="Small ribosomal subunit protein bS20">
    <location>
        <begin position="1"/>
        <end position="78"/>
    </location>
</feature>